<proteinExistence type="inferred from homology"/>
<keyword id="KW-0456">Lyase</keyword>
<keyword id="KW-0479">Metal-binding</keyword>
<keyword id="KW-1185">Reference proteome</keyword>
<keyword id="KW-0862">Zinc</keyword>
<sequence length="286" mass="31294">MSIISTKYLLQDAQANGYAVPAFNIHNAETIQAILEVCSEMRSPVILAGTPGTFKHIALEEIYALCSAYSTTYNMPLALHLDHHESLDDIRRKVHAGVRSAMIDGSHFPFAENVKLVKSVVDFCHSQDCSVEAELGRLGGVEDDMSVDAESAFLTDPQEAKRFVELTGVDSLAVAIGTAHGLYSKTPKIDFQRLAEIREVVDVPLVLHGASDVPDEFVRRTIELGVTKVNVATELKIAFAGAVKAWFAENPQGNDPRYYMRVGMDAMKEVVRNKINVCGSANRISA</sequence>
<organism>
    <name type="scientific">Escherichia coli O45:K1 (strain S88 / ExPEC)</name>
    <dbReference type="NCBI Taxonomy" id="585035"/>
    <lineage>
        <taxon>Bacteria</taxon>
        <taxon>Pseudomonadati</taxon>
        <taxon>Pseudomonadota</taxon>
        <taxon>Gammaproteobacteria</taxon>
        <taxon>Enterobacterales</taxon>
        <taxon>Enterobacteriaceae</taxon>
        <taxon>Escherichia</taxon>
    </lineage>
</organism>
<reference key="1">
    <citation type="journal article" date="2009" name="PLoS Genet.">
        <title>Organised genome dynamics in the Escherichia coli species results in highly diverse adaptive paths.</title>
        <authorList>
            <person name="Touchon M."/>
            <person name="Hoede C."/>
            <person name="Tenaillon O."/>
            <person name="Barbe V."/>
            <person name="Baeriswyl S."/>
            <person name="Bidet P."/>
            <person name="Bingen E."/>
            <person name="Bonacorsi S."/>
            <person name="Bouchier C."/>
            <person name="Bouvet O."/>
            <person name="Calteau A."/>
            <person name="Chiapello H."/>
            <person name="Clermont O."/>
            <person name="Cruveiller S."/>
            <person name="Danchin A."/>
            <person name="Diard M."/>
            <person name="Dossat C."/>
            <person name="Karoui M.E."/>
            <person name="Frapy E."/>
            <person name="Garry L."/>
            <person name="Ghigo J.M."/>
            <person name="Gilles A.M."/>
            <person name="Johnson J."/>
            <person name="Le Bouguenec C."/>
            <person name="Lescat M."/>
            <person name="Mangenot S."/>
            <person name="Martinez-Jehanne V."/>
            <person name="Matic I."/>
            <person name="Nassif X."/>
            <person name="Oztas S."/>
            <person name="Petit M.A."/>
            <person name="Pichon C."/>
            <person name="Rouy Z."/>
            <person name="Ruf C.S."/>
            <person name="Schneider D."/>
            <person name="Tourret J."/>
            <person name="Vacherie B."/>
            <person name="Vallenet D."/>
            <person name="Medigue C."/>
            <person name="Rocha E.P.C."/>
            <person name="Denamur E."/>
        </authorList>
    </citation>
    <scope>NUCLEOTIDE SEQUENCE [LARGE SCALE GENOMIC DNA]</scope>
    <source>
        <strain>S88 / ExPEC</strain>
    </source>
</reference>
<evidence type="ECO:0000255" key="1">
    <source>
        <dbReference type="HAMAP-Rule" id="MF_01293"/>
    </source>
</evidence>
<comment type="function">
    <text evidence="1">Catalytic subunit of the tagatose-1,6-bisphosphate aldolase KbaYZ, which catalyzes the reversible aldol condensation of dihydroxyacetone phosphate (DHAP or glycerone-phosphate) with glyceraldehyde 3-phosphate (G3P) to produce tagatose 1,6-bisphosphate (TBP). Requires KbaZ subunit for full activity and stability.</text>
</comment>
<comment type="catalytic activity">
    <reaction evidence="1">
        <text>D-tagatofuranose 1,6-bisphosphate = D-glyceraldehyde 3-phosphate + dihydroxyacetone phosphate</text>
        <dbReference type="Rhea" id="RHEA:22948"/>
        <dbReference type="ChEBI" id="CHEBI:57642"/>
        <dbReference type="ChEBI" id="CHEBI:58694"/>
        <dbReference type="ChEBI" id="CHEBI:59776"/>
        <dbReference type="EC" id="4.1.2.40"/>
    </reaction>
</comment>
<comment type="cofactor">
    <cofactor evidence="1">
        <name>Zn(2+)</name>
        <dbReference type="ChEBI" id="CHEBI:29105"/>
    </cofactor>
    <text evidence="1">Binds 1 zinc ion per subunit.</text>
</comment>
<comment type="pathway">
    <text evidence="1">Carbohydrate metabolism; D-tagatose 6-phosphate degradation; D-glyceraldehyde 3-phosphate and glycerone phosphate from D-tagatose 6-phosphate: step 2/2.</text>
</comment>
<comment type="subunit">
    <text evidence="1">Homotetramer. Forms a complex with KbaZ.</text>
</comment>
<comment type="similarity">
    <text evidence="1">Belongs to the class II fructose-bisphosphate aldolase family. TagBP aldolase KbaY subfamily.</text>
</comment>
<gene>
    <name evidence="1" type="primary">kbaY</name>
    <name type="ordered locus">ECS88_3525</name>
</gene>
<name>KBAY_ECO45</name>
<dbReference type="EC" id="4.1.2.40" evidence="1"/>
<dbReference type="EMBL" id="CU928161">
    <property type="protein sequence ID" value="CAR04753.1"/>
    <property type="molecule type" value="Genomic_DNA"/>
</dbReference>
<dbReference type="RefSeq" id="WP_000022766.1">
    <property type="nucleotide sequence ID" value="NC_011742.1"/>
</dbReference>
<dbReference type="SMR" id="B7MB62"/>
<dbReference type="GeneID" id="75203745"/>
<dbReference type="KEGG" id="ecz:ECS88_3525"/>
<dbReference type="HOGENOM" id="CLU_040088_0_1_6"/>
<dbReference type="UniPathway" id="UPA00704">
    <property type="reaction ID" value="UER00716"/>
</dbReference>
<dbReference type="Proteomes" id="UP000000747">
    <property type="component" value="Chromosome"/>
</dbReference>
<dbReference type="GO" id="GO:0005829">
    <property type="term" value="C:cytosol"/>
    <property type="evidence" value="ECO:0007669"/>
    <property type="project" value="TreeGrafter"/>
</dbReference>
<dbReference type="GO" id="GO:0009025">
    <property type="term" value="F:tagatose-bisphosphate aldolase activity"/>
    <property type="evidence" value="ECO:0007669"/>
    <property type="project" value="UniProtKB-UniRule"/>
</dbReference>
<dbReference type="GO" id="GO:0008270">
    <property type="term" value="F:zinc ion binding"/>
    <property type="evidence" value="ECO:0007669"/>
    <property type="project" value="UniProtKB-UniRule"/>
</dbReference>
<dbReference type="GO" id="GO:0005975">
    <property type="term" value="P:carbohydrate metabolic process"/>
    <property type="evidence" value="ECO:0007669"/>
    <property type="project" value="InterPro"/>
</dbReference>
<dbReference type="GO" id="GO:2001059">
    <property type="term" value="P:D-tagatose 6-phosphate catabolic process"/>
    <property type="evidence" value="ECO:0007669"/>
    <property type="project" value="UniProtKB-UniRule"/>
</dbReference>
<dbReference type="CDD" id="cd00453">
    <property type="entry name" value="FTBP_aldolase_II"/>
    <property type="match status" value="1"/>
</dbReference>
<dbReference type="FunFam" id="3.20.20.70:FF:000043">
    <property type="entry name" value="D-tagatose-1,6-bisphosphate aldolase subunit GatY"/>
    <property type="match status" value="1"/>
</dbReference>
<dbReference type="Gene3D" id="3.20.20.70">
    <property type="entry name" value="Aldolase class I"/>
    <property type="match status" value="1"/>
</dbReference>
<dbReference type="HAMAP" id="MF_01293">
    <property type="entry name" value="TagBP_aldolase_KbaY"/>
    <property type="match status" value="1"/>
</dbReference>
<dbReference type="InterPro" id="IPR013785">
    <property type="entry name" value="Aldolase_TIM"/>
</dbReference>
<dbReference type="InterPro" id="IPR050246">
    <property type="entry name" value="Class_II_FBP_aldolase"/>
</dbReference>
<dbReference type="InterPro" id="IPR000771">
    <property type="entry name" value="FBA_II"/>
</dbReference>
<dbReference type="InterPro" id="IPR023788">
    <property type="entry name" value="TagBP_ald_KbaY"/>
</dbReference>
<dbReference type="InterPro" id="IPR011288">
    <property type="entry name" value="TagBP_ald_KbaY/GatY"/>
</dbReference>
<dbReference type="NCBIfam" id="TIGR00167">
    <property type="entry name" value="cbbA"/>
    <property type="match status" value="1"/>
</dbReference>
<dbReference type="NCBIfam" id="NF006626">
    <property type="entry name" value="PRK09195.1"/>
    <property type="match status" value="1"/>
</dbReference>
<dbReference type="NCBIfam" id="NF009374">
    <property type="entry name" value="PRK12737.1"/>
    <property type="match status" value="1"/>
</dbReference>
<dbReference type="NCBIfam" id="NF009375">
    <property type="entry name" value="PRK12738.1"/>
    <property type="match status" value="1"/>
</dbReference>
<dbReference type="NCBIfam" id="TIGR01858">
    <property type="entry name" value="tag_bisphos_ald"/>
    <property type="match status" value="1"/>
</dbReference>
<dbReference type="PANTHER" id="PTHR30304">
    <property type="entry name" value="D-TAGATOSE-1,6-BISPHOSPHATE ALDOLASE"/>
    <property type="match status" value="1"/>
</dbReference>
<dbReference type="PANTHER" id="PTHR30304:SF0">
    <property type="entry name" value="D-TAGATOSE-1,6-BISPHOSPHATE ALDOLASE SUBUNIT GATY-RELATED"/>
    <property type="match status" value="1"/>
</dbReference>
<dbReference type="Pfam" id="PF01116">
    <property type="entry name" value="F_bP_aldolase"/>
    <property type="match status" value="1"/>
</dbReference>
<dbReference type="PIRSF" id="PIRSF001359">
    <property type="entry name" value="F_bP_aldolase_II"/>
    <property type="match status" value="1"/>
</dbReference>
<dbReference type="SUPFAM" id="SSF51569">
    <property type="entry name" value="Aldolase"/>
    <property type="match status" value="1"/>
</dbReference>
<dbReference type="PROSITE" id="PS00602">
    <property type="entry name" value="ALDOLASE_CLASS_II_1"/>
    <property type="match status" value="1"/>
</dbReference>
<dbReference type="PROSITE" id="PS00806">
    <property type="entry name" value="ALDOLASE_CLASS_II_2"/>
    <property type="match status" value="1"/>
</dbReference>
<feature type="chain" id="PRO_1000140428" description="D-tagatose-1,6-bisphosphate aldolase subunit KbaY">
    <location>
        <begin position="1"/>
        <end position="286"/>
    </location>
</feature>
<feature type="active site" description="Proton donor" evidence="1">
    <location>
        <position position="82"/>
    </location>
</feature>
<feature type="binding site" evidence="1">
    <location>
        <position position="83"/>
    </location>
    <ligand>
        <name>Zn(2+)</name>
        <dbReference type="ChEBI" id="CHEBI:29105"/>
        <note>catalytic</note>
    </ligand>
</feature>
<feature type="binding site" evidence="1">
    <location>
        <position position="180"/>
    </location>
    <ligand>
        <name>Zn(2+)</name>
        <dbReference type="ChEBI" id="CHEBI:29105"/>
        <note>catalytic</note>
    </ligand>
</feature>
<feature type="binding site" evidence="1">
    <location>
        <position position="181"/>
    </location>
    <ligand>
        <name>dihydroxyacetone phosphate</name>
        <dbReference type="ChEBI" id="CHEBI:57642"/>
    </ligand>
</feature>
<feature type="binding site" evidence="1">
    <location>
        <position position="208"/>
    </location>
    <ligand>
        <name>Zn(2+)</name>
        <dbReference type="ChEBI" id="CHEBI:29105"/>
        <note>catalytic</note>
    </ligand>
</feature>
<feature type="binding site" evidence="1">
    <location>
        <begin position="209"/>
        <end position="211"/>
    </location>
    <ligand>
        <name>dihydroxyacetone phosphate</name>
        <dbReference type="ChEBI" id="CHEBI:57642"/>
    </ligand>
</feature>
<feature type="binding site" evidence="1">
    <location>
        <begin position="230"/>
        <end position="233"/>
    </location>
    <ligand>
        <name>dihydroxyacetone phosphate</name>
        <dbReference type="ChEBI" id="CHEBI:57642"/>
    </ligand>
</feature>
<protein>
    <recommendedName>
        <fullName evidence="1">D-tagatose-1,6-bisphosphate aldolase subunit KbaY</fullName>
        <shortName evidence="1">TBPA</shortName>
        <shortName evidence="1">TagBP aldolase</shortName>
        <ecNumber evidence="1">4.1.2.40</ecNumber>
    </recommendedName>
    <alternativeName>
        <fullName evidence="1">D-tagatose-bisphosphate aldolase class II</fullName>
    </alternativeName>
    <alternativeName>
        <fullName evidence="1">Ketose 1,6-bisphosphate aldolase class II</fullName>
    </alternativeName>
    <alternativeName>
        <fullName evidence="1">Tagatose-bisphosphate aldolase</fullName>
    </alternativeName>
</protein>
<accession>B7MB62</accession>